<accession>Q7NE70</accession>
<protein>
    <recommendedName>
        <fullName evidence="1">N-acetyl-gamma-glutamyl-phosphate reductase</fullName>
        <shortName evidence="1">AGPR</shortName>
        <ecNumber evidence="1">1.2.1.38</ecNumber>
    </recommendedName>
    <alternativeName>
        <fullName evidence="1">N-acetyl-glutamate semialdehyde dehydrogenase</fullName>
        <shortName evidence="1">NAGSA dehydrogenase</shortName>
    </alternativeName>
</protein>
<organism>
    <name type="scientific">Gloeobacter violaceus (strain ATCC 29082 / PCC 7421)</name>
    <dbReference type="NCBI Taxonomy" id="251221"/>
    <lineage>
        <taxon>Bacteria</taxon>
        <taxon>Bacillati</taxon>
        <taxon>Cyanobacteriota</taxon>
        <taxon>Cyanophyceae</taxon>
        <taxon>Gloeobacterales</taxon>
        <taxon>Gloeobacteraceae</taxon>
        <taxon>Gloeobacter</taxon>
    </lineage>
</organism>
<feature type="chain" id="PRO_0000112409" description="N-acetyl-gamma-glutamyl-phosphate reductase">
    <location>
        <begin position="1"/>
        <end position="350"/>
    </location>
</feature>
<feature type="active site" evidence="1">
    <location>
        <position position="153"/>
    </location>
</feature>
<comment type="function">
    <text evidence="1">Catalyzes the NADPH-dependent reduction of N-acetyl-5-glutamyl phosphate to yield N-acetyl-L-glutamate 5-semialdehyde.</text>
</comment>
<comment type="catalytic activity">
    <reaction evidence="1">
        <text>N-acetyl-L-glutamate 5-semialdehyde + phosphate + NADP(+) = N-acetyl-L-glutamyl 5-phosphate + NADPH + H(+)</text>
        <dbReference type="Rhea" id="RHEA:21588"/>
        <dbReference type="ChEBI" id="CHEBI:15378"/>
        <dbReference type="ChEBI" id="CHEBI:29123"/>
        <dbReference type="ChEBI" id="CHEBI:43474"/>
        <dbReference type="ChEBI" id="CHEBI:57783"/>
        <dbReference type="ChEBI" id="CHEBI:57936"/>
        <dbReference type="ChEBI" id="CHEBI:58349"/>
        <dbReference type="EC" id="1.2.1.38"/>
    </reaction>
</comment>
<comment type="pathway">
    <text evidence="1">Amino-acid biosynthesis; L-arginine biosynthesis; N(2)-acetyl-L-ornithine from L-glutamate: step 3/4.</text>
</comment>
<comment type="subcellular location">
    <subcellularLocation>
        <location evidence="1">Cytoplasm</location>
    </subcellularLocation>
</comment>
<comment type="similarity">
    <text evidence="1">Belongs to the NAGSA dehydrogenase family. Type 1 subfamily.</text>
</comment>
<evidence type="ECO:0000255" key="1">
    <source>
        <dbReference type="HAMAP-Rule" id="MF_00150"/>
    </source>
</evidence>
<proteinExistence type="inferred from homology"/>
<reference key="1">
    <citation type="journal article" date="2003" name="DNA Res.">
        <title>Complete genome structure of Gloeobacter violaceus PCC 7421, a cyanobacterium that lacks thylakoids.</title>
        <authorList>
            <person name="Nakamura Y."/>
            <person name="Kaneko T."/>
            <person name="Sato S."/>
            <person name="Mimuro M."/>
            <person name="Miyashita H."/>
            <person name="Tsuchiya T."/>
            <person name="Sasamoto S."/>
            <person name="Watanabe A."/>
            <person name="Kawashima K."/>
            <person name="Kishida Y."/>
            <person name="Kiyokawa C."/>
            <person name="Kohara M."/>
            <person name="Matsumoto M."/>
            <person name="Matsuno A."/>
            <person name="Nakazaki N."/>
            <person name="Shimpo S."/>
            <person name="Takeuchi C."/>
            <person name="Yamada M."/>
            <person name="Tabata S."/>
        </authorList>
    </citation>
    <scope>NUCLEOTIDE SEQUENCE [LARGE SCALE GENOMIC DNA]</scope>
    <source>
        <strain>ATCC 29082 / PCC 7421</strain>
    </source>
</reference>
<keyword id="KW-0028">Amino-acid biosynthesis</keyword>
<keyword id="KW-0055">Arginine biosynthesis</keyword>
<keyword id="KW-0963">Cytoplasm</keyword>
<keyword id="KW-0521">NADP</keyword>
<keyword id="KW-0560">Oxidoreductase</keyword>
<keyword id="KW-1185">Reference proteome</keyword>
<sequence>MAEKLRVGIVGASGYGGVQLVRLLLDHPRVEIAYLGANQNAGTPFGELYPQLAHRIDRVCEAVELDRIVEACSVVFLATPNGIAHTLAPGLLAGGLRVFDLSADYRFVNLETYQSWYGGDRHDAAVAREAVYGLPELYRERIRTARLVGCPGCYPTASLLAAAPLLKQGLIDPRSLIIDAKSGVSGAGRALKTGSLFAEADSSVAAYSVARHRHIPEIEQVCSDLAGMRVQVQFTPHLIPMARGMLVTLYAQLRDPGLVSEDMLTIYEAFYRQAPAVRVLGSGIYPQTKWASGTNTCFIGLEVDQRTERVVVLSALDNLVKGQSGQAIQAMNLTQGWEEMLGLPAIGFYP</sequence>
<gene>
    <name evidence="1" type="primary">argC</name>
    <name type="ordered locus">glr4010</name>
</gene>
<dbReference type="EC" id="1.2.1.38" evidence="1"/>
<dbReference type="EMBL" id="BA000045">
    <property type="protein sequence ID" value="BAC91951.1"/>
    <property type="molecule type" value="Genomic_DNA"/>
</dbReference>
<dbReference type="RefSeq" id="NP_926956.1">
    <property type="nucleotide sequence ID" value="NC_005125.1"/>
</dbReference>
<dbReference type="RefSeq" id="WP_011143998.1">
    <property type="nucleotide sequence ID" value="NC_005125.1"/>
</dbReference>
<dbReference type="SMR" id="Q7NE70"/>
<dbReference type="FunCoup" id="Q7NE70">
    <property type="interactions" value="95"/>
</dbReference>
<dbReference type="STRING" id="251221.gene:10761528"/>
<dbReference type="EnsemblBacteria" id="BAC91951">
    <property type="protein sequence ID" value="BAC91951"/>
    <property type="gene ID" value="BAC91951"/>
</dbReference>
<dbReference type="KEGG" id="gvi:glr4010"/>
<dbReference type="PATRIC" id="fig|251221.4.peg.4042"/>
<dbReference type="eggNOG" id="COG0002">
    <property type="taxonomic scope" value="Bacteria"/>
</dbReference>
<dbReference type="HOGENOM" id="CLU_006384_0_1_3"/>
<dbReference type="InParanoid" id="Q7NE70"/>
<dbReference type="OrthoDB" id="9801289at2"/>
<dbReference type="PhylomeDB" id="Q7NE70"/>
<dbReference type="UniPathway" id="UPA00068">
    <property type="reaction ID" value="UER00108"/>
</dbReference>
<dbReference type="Proteomes" id="UP000000557">
    <property type="component" value="Chromosome"/>
</dbReference>
<dbReference type="GO" id="GO:0005737">
    <property type="term" value="C:cytoplasm"/>
    <property type="evidence" value="ECO:0007669"/>
    <property type="project" value="UniProtKB-SubCell"/>
</dbReference>
<dbReference type="GO" id="GO:0003942">
    <property type="term" value="F:N-acetyl-gamma-glutamyl-phosphate reductase activity"/>
    <property type="evidence" value="ECO:0007669"/>
    <property type="project" value="UniProtKB-UniRule"/>
</dbReference>
<dbReference type="GO" id="GO:0051287">
    <property type="term" value="F:NAD binding"/>
    <property type="evidence" value="ECO:0007669"/>
    <property type="project" value="InterPro"/>
</dbReference>
<dbReference type="GO" id="GO:0070401">
    <property type="term" value="F:NADP+ binding"/>
    <property type="evidence" value="ECO:0007669"/>
    <property type="project" value="InterPro"/>
</dbReference>
<dbReference type="GO" id="GO:0006526">
    <property type="term" value="P:L-arginine biosynthetic process"/>
    <property type="evidence" value="ECO:0007669"/>
    <property type="project" value="UniProtKB-UniRule"/>
</dbReference>
<dbReference type="CDD" id="cd23934">
    <property type="entry name" value="AGPR_1_C"/>
    <property type="match status" value="1"/>
</dbReference>
<dbReference type="CDD" id="cd17895">
    <property type="entry name" value="AGPR_1_N"/>
    <property type="match status" value="1"/>
</dbReference>
<dbReference type="FunFam" id="3.30.360.10:FF:000014">
    <property type="entry name" value="N-acetyl-gamma-glutamyl-phosphate reductase"/>
    <property type="match status" value="1"/>
</dbReference>
<dbReference type="Gene3D" id="3.30.360.10">
    <property type="entry name" value="Dihydrodipicolinate Reductase, domain 2"/>
    <property type="match status" value="1"/>
</dbReference>
<dbReference type="Gene3D" id="3.40.50.720">
    <property type="entry name" value="NAD(P)-binding Rossmann-like Domain"/>
    <property type="match status" value="1"/>
</dbReference>
<dbReference type="HAMAP" id="MF_00150">
    <property type="entry name" value="ArgC_type1"/>
    <property type="match status" value="1"/>
</dbReference>
<dbReference type="InterPro" id="IPR023013">
    <property type="entry name" value="AGPR_AS"/>
</dbReference>
<dbReference type="InterPro" id="IPR000706">
    <property type="entry name" value="AGPR_type-1"/>
</dbReference>
<dbReference type="InterPro" id="IPR036291">
    <property type="entry name" value="NAD(P)-bd_dom_sf"/>
</dbReference>
<dbReference type="InterPro" id="IPR050085">
    <property type="entry name" value="NAGSA_dehydrogenase"/>
</dbReference>
<dbReference type="InterPro" id="IPR000534">
    <property type="entry name" value="Semialdehyde_DH_NAD-bd"/>
</dbReference>
<dbReference type="NCBIfam" id="TIGR01850">
    <property type="entry name" value="argC"/>
    <property type="match status" value="1"/>
</dbReference>
<dbReference type="PANTHER" id="PTHR32338:SF10">
    <property type="entry name" value="N-ACETYL-GAMMA-GLUTAMYL-PHOSPHATE REDUCTASE, CHLOROPLASTIC-RELATED"/>
    <property type="match status" value="1"/>
</dbReference>
<dbReference type="PANTHER" id="PTHR32338">
    <property type="entry name" value="N-ACETYL-GAMMA-GLUTAMYL-PHOSPHATE REDUCTASE, CHLOROPLASTIC-RELATED-RELATED"/>
    <property type="match status" value="1"/>
</dbReference>
<dbReference type="Pfam" id="PF01118">
    <property type="entry name" value="Semialdhyde_dh"/>
    <property type="match status" value="1"/>
</dbReference>
<dbReference type="Pfam" id="PF22698">
    <property type="entry name" value="Semialdhyde_dhC_1"/>
    <property type="match status" value="1"/>
</dbReference>
<dbReference type="SMART" id="SM00859">
    <property type="entry name" value="Semialdhyde_dh"/>
    <property type="match status" value="1"/>
</dbReference>
<dbReference type="SUPFAM" id="SSF55347">
    <property type="entry name" value="Glyceraldehyde-3-phosphate dehydrogenase-like, C-terminal domain"/>
    <property type="match status" value="1"/>
</dbReference>
<dbReference type="SUPFAM" id="SSF51735">
    <property type="entry name" value="NAD(P)-binding Rossmann-fold domains"/>
    <property type="match status" value="1"/>
</dbReference>
<dbReference type="PROSITE" id="PS01224">
    <property type="entry name" value="ARGC"/>
    <property type="match status" value="1"/>
</dbReference>
<name>ARGC_GLOVI</name>